<name>CMTR2_PONAB</name>
<keyword id="KW-0963">Cytoplasm</keyword>
<keyword id="KW-0489">Methyltransferase</keyword>
<keyword id="KW-0506">mRNA capping</keyword>
<keyword id="KW-0507">mRNA processing</keyword>
<keyword id="KW-0539">Nucleus</keyword>
<keyword id="KW-1185">Reference proteome</keyword>
<keyword id="KW-0949">S-adenosyl-L-methionine</keyword>
<keyword id="KW-0808">Transferase</keyword>
<dbReference type="EC" id="2.1.1.296" evidence="1"/>
<dbReference type="EMBL" id="CR858874">
    <property type="protein sequence ID" value="CAH91073.1"/>
    <property type="molecule type" value="mRNA"/>
</dbReference>
<dbReference type="RefSeq" id="NP_001125622.1">
    <property type="nucleotide sequence ID" value="NM_001132150.1"/>
</dbReference>
<dbReference type="SMR" id="Q5RAY7"/>
<dbReference type="FunCoup" id="Q5RAY7">
    <property type="interactions" value="4423"/>
</dbReference>
<dbReference type="STRING" id="9601.ENSPPYP00000008505"/>
<dbReference type="GeneID" id="100172540"/>
<dbReference type="KEGG" id="pon:100172540"/>
<dbReference type="CTD" id="55783"/>
<dbReference type="eggNOG" id="KOG3674">
    <property type="taxonomic scope" value="Eukaryota"/>
</dbReference>
<dbReference type="InParanoid" id="Q5RAY7"/>
<dbReference type="OrthoDB" id="429597at2759"/>
<dbReference type="Proteomes" id="UP000001595">
    <property type="component" value="Unplaced"/>
</dbReference>
<dbReference type="GO" id="GO:0005737">
    <property type="term" value="C:cytoplasm"/>
    <property type="evidence" value="ECO:0000250"/>
    <property type="project" value="UniProtKB"/>
</dbReference>
<dbReference type="GO" id="GO:0005634">
    <property type="term" value="C:nucleus"/>
    <property type="evidence" value="ECO:0000250"/>
    <property type="project" value="UniProtKB"/>
</dbReference>
<dbReference type="GO" id="GO:0004483">
    <property type="term" value="F:mRNA (nucleoside-2'-O-)-methyltransferase activity"/>
    <property type="evidence" value="ECO:0000250"/>
    <property type="project" value="UniProtKB"/>
</dbReference>
<dbReference type="GO" id="GO:0006370">
    <property type="term" value="P:7-methylguanosine mRNA capping"/>
    <property type="evidence" value="ECO:0000250"/>
    <property type="project" value="UniProtKB"/>
</dbReference>
<dbReference type="GO" id="GO:0032259">
    <property type="term" value="P:methylation"/>
    <property type="evidence" value="ECO:0007669"/>
    <property type="project" value="UniProtKB-KW"/>
</dbReference>
<dbReference type="FunFam" id="3.40.50.12760:FF:000002">
    <property type="entry name" value="Cap methyltransferase 2"/>
    <property type="match status" value="1"/>
</dbReference>
<dbReference type="FunFam" id="3.40.50.12760:FF:000003">
    <property type="entry name" value="Cap methyltransferase 2"/>
    <property type="match status" value="1"/>
</dbReference>
<dbReference type="Gene3D" id="3.40.50.12760">
    <property type="match status" value="2"/>
</dbReference>
<dbReference type="InterPro" id="IPR025807">
    <property type="entry name" value="Adrift-typ_MeTrfase"/>
</dbReference>
<dbReference type="InterPro" id="IPR050851">
    <property type="entry name" value="mRNA_Cap_2O-Ribose_MeTrfase"/>
</dbReference>
<dbReference type="InterPro" id="IPR002877">
    <property type="entry name" value="RNA_MeTrfase_FtsJ_dom"/>
</dbReference>
<dbReference type="InterPro" id="IPR029063">
    <property type="entry name" value="SAM-dependent_MTases_sf"/>
</dbReference>
<dbReference type="PANTHER" id="PTHR16121">
    <property type="entry name" value="CAP-SPECIFIC MRNA (NUCLEOSIDE-2'-O-)-METHYLTRANSFERASE 1-RELATED"/>
    <property type="match status" value="1"/>
</dbReference>
<dbReference type="PANTHER" id="PTHR16121:SF2">
    <property type="entry name" value="CAP-SPECIFIC MRNA (NUCLEOSIDE-2'-O-)-METHYLTRANSFERASE 2"/>
    <property type="match status" value="1"/>
</dbReference>
<dbReference type="Pfam" id="PF01728">
    <property type="entry name" value="FtsJ"/>
    <property type="match status" value="1"/>
</dbReference>
<dbReference type="SUPFAM" id="SSF53335">
    <property type="entry name" value="S-adenosyl-L-methionine-dependent methyltransferases"/>
    <property type="match status" value="1"/>
</dbReference>
<dbReference type="PROSITE" id="PS51614">
    <property type="entry name" value="SAM_MT_ADRIFT"/>
    <property type="match status" value="1"/>
</dbReference>
<evidence type="ECO:0000250" key="1">
    <source>
        <dbReference type="UniProtKB" id="Q8IYT2"/>
    </source>
</evidence>
<evidence type="ECO:0000255" key="2">
    <source>
        <dbReference type="PROSITE-ProRule" id="PRU00946"/>
    </source>
</evidence>
<reference key="1">
    <citation type="submission" date="2004-11" db="EMBL/GenBank/DDBJ databases">
        <authorList>
            <consortium name="The German cDNA consortium"/>
        </authorList>
    </citation>
    <scope>NUCLEOTIDE SEQUENCE [LARGE SCALE MRNA]</scope>
    <source>
        <tissue>Kidney</tissue>
    </source>
</reference>
<organism>
    <name type="scientific">Pongo abelii</name>
    <name type="common">Sumatran orangutan</name>
    <name type="synonym">Pongo pygmaeus abelii</name>
    <dbReference type="NCBI Taxonomy" id="9601"/>
    <lineage>
        <taxon>Eukaryota</taxon>
        <taxon>Metazoa</taxon>
        <taxon>Chordata</taxon>
        <taxon>Craniata</taxon>
        <taxon>Vertebrata</taxon>
        <taxon>Euteleostomi</taxon>
        <taxon>Mammalia</taxon>
        <taxon>Eutheria</taxon>
        <taxon>Euarchontoglires</taxon>
        <taxon>Primates</taxon>
        <taxon>Haplorrhini</taxon>
        <taxon>Catarrhini</taxon>
        <taxon>Hominidae</taxon>
        <taxon>Pongo</taxon>
    </lineage>
</organism>
<protein>
    <recommendedName>
        <fullName>Cap-specific mRNA (nucleoside-2'-O-)-methyltransferase 2</fullName>
        <ecNumber evidence="1">2.1.1.296</ecNumber>
    </recommendedName>
    <alternativeName>
        <fullName>Cap methyltransferase 2</fullName>
    </alternativeName>
    <alternativeName>
        <fullName>Cap2 2'O-ribose methyltransferase 2</fullName>
        <shortName>MTr2</shortName>
    </alternativeName>
    <alternativeName>
        <fullName>FtsJ methyltransferase domain-containing protein 1</fullName>
    </alternativeName>
</protein>
<comment type="function">
    <text evidence="1">S-adenosyl-L-methionine-dependent methyltransferase that mediates mRNA cap2 2'-O-ribose methylation to the 5'-cap structure of mRNAs. Methylates the ribose of the second nucleotide of a m(7)GpppG-capped mRNA and small nuclear RNA (snRNA) (cap0) to produce m(7)GpppRmpNm (cap2). Recognizes a guanosine cap on RNA independently of its N(7) methylation status. Display cap2 methylation on both cap0 and cap1. Displays a preference for cap1 RNAs.</text>
</comment>
<comment type="catalytic activity">
    <reaction evidence="1">
        <text>a 5'-end (N(7)-methyl 5'-triphosphoguanosine)-(2'-O-methyl-ribonucleoside)-(ribonucleotide) in mRNA + S-adenosyl-L-methionine = a 5'-end (N(7)-methyl 5'-triphosphoguanosine)-(2'-O-methyl-ribonucleoside)-(2'-O-methyl-ribonucleotide) in mRNA + S-adenosyl-L-homocysteine + H(+)</text>
        <dbReference type="Rhea" id="RHEA:67024"/>
        <dbReference type="Rhea" id="RHEA-COMP:17169"/>
        <dbReference type="Rhea" id="RHEA-COMP:17170"/>
        <dbReference type="ChEBI" id="CHEBI:15378"/>
        <dbReference type="ChEBI" id="CHEBI:57856"/>
        <dbReference type="ChEBI" id="CHEBI:59789"/>
        <dbReference type="ChEBI" id="CHEBI:167612"/>
        <dbReference type="ChEBI" id="CHEBI:167614"/>
        <dbReference type="EC" id="2.1.1.296"/>
    </reaction>
</comment>
<comment type="subcellular location">
    <subcellularLocation>
        <location evidence="1">Nucleus</location>
    </subcellularLocation>
    <subcellularLocation>
        <location evidence="1">Cytoplasm</location>
    </subcellularLocation>
</comment>
<feature type="chain" id="PRO_0000326182" description="Cap-specific mRNA (nucleoside-2'-O-)-methyltransferase 2">
    <location>
        <begin position="1"/>
        <end position="769"/>
    </location>
</feature>
<feature type="domain" description="Adrift-type SAM-dependent 2'-O-MTase" evidence="2">
    <location>
        <begin position="109"/>
        <end position="322"/>
    </location>
</feature>
<feature type="active site" evidence="1">
    <location>
        <position position="117"/>
    </location>
</feature>
<feature type="active site" evidence="1">
    <location>
        <position position="235"/>
    </location>
</feature>
<feature type="active site" description="Proton acceptor" evidence="2">
    <location>
        <position position="275"/>
    </location>
</feature>
<feature type="binding site" evidence="2">
    <location>
        <position position="148"/>
    </location>
    <ligand>
        <name>S-adenosyl-L-methionine</name>
        <dbReference type="ChEBI" id="CHEBI:59789"/>
    </ligand>
</feature>
<feature type="binding site" evidence="2">
    <location>
        <position position="167"/>
    </location>
    <ligand>
        <name>S-adenosyl-L-methionine</name>
        <dbReference type="ChEBI" id="CHEBI:59789"/>
    </ligand>
</feature>
<feature type="binding site" evidence="2">
    <location>
        <position position="235"/>
    </location>
    <ligand>
        <name>S-adenosyl-L-methionine</name>
        <dbReference type="ChEBI" id="CHEBI:59789"/>
    </ligand>
</feature>
<sequence length="769" mass="88166">MSKCRKTPVQQLASPTSFSPDILADIFELFAKNFSYSKPLNNEWQLPDPSEIFTCDHTEFNAFLDLKNSLNEVKNLLSDKKLDEWHEHTAFTNKAGKIISHVRKSVNAELCTQAWCKFHEILCSFPLIPQEAFQNGKLNSLHLCEAPGAFIASLNHYLKSHRFPCHWSWVANTLNPYHEANDDLMMIMDDRLIANTLHWWYFGPDNTGDIMTLKFLTGLQNFISSMATVHLVTADGSFDCQGNPGEQEALVSSLHYCEVVTALTTLGNGGSFVLKMFTMFEHCSINLMYLLNCCLDQVHVFKPATSKAGNSEVYVVCLYYKGREAIHPLLSKMTLNFGTEMKRKALFPHHVIPDSFLKRHEECCVFFHKYQLETISENIRLFECMGKAEQEKLNNLRDCAVQYFMQKFQLKHLSRNNWLVKKSSIGCSTNTKWFGQRNKYFRTYNERKMLEALSWKDKVAKGYFNSWAEEHGVYHPGQSSILEGTASNLECHLWHILEGKKLPKVKCSPFCNGEILKTLNEAIEKSLGGAFNLDSKFRPKQQYSCSCHVFSEELIFSELCSLTECLQDEQVVEPSNRIKCLLVGFSTLHNIKMHIPLEVRLLESAELTTFSCSLLHDGDPTYQRLFLDCLLHSLRELHTGDVMILPVLSCFTRFMAGLIFVLHSCFRFITFFCPTSSDPLRTCAVLLCVGYQDLPNPVFQYLQSVNELLSTLLNSDSPQQVLQFVPMEVLLKGALLDFLWDLNAAIAKRHLHFIIQREREEINSLQLQN</sequence>
<accession>Q5RAY7</accession>
<gene>
    <name type="primary">CMTR2</name>
    <name type="synonym">FTSJD1</name>
</gene>
<proteinExistence type="evidence at transcript level"/>